<feature type="chain" id="PRO_0000231918" description="RNA pyrophosphohydrolase">
    <location>
        <begin position="1"/>
        <end position="170"/>
    </location>
</feature>
<feature type="domain" description="Nudix hydrolase" evidence="1">
    <location>
        <begin position="8"/>
        <end position="158"/>
    </location>
</feature>
<feature type="short sequence motif" description="Nudix box">
    <location>
        <begin position="46"/>
        <end position="67"/>
    </location>
</feature>
<reference key="1">
    <citation type="journal article" date="2006" name="Appl. Environ. Microbiol.">
        <title>Genome sequence of the chemolithoautotrophic nitrite-oxidizing bacterium Nitrobacter winogradskyi Nb-255.</title>
        <authorList>
            <person name="Starkenburg S.R."/>
            <person name="Chain P.S.G."/>
            <person name="Sayavedra-Soto L.A."/>
            <person name="Hauser L."/>
            <person name="Land M.L."/>
            <person name="Larimer F.W."/>
            <person name="Malfatti S.A."/>
            <person name="Klotz M.G."/>
            <person name="Bottomley P.J."/>
            <person name="Arp D.J."/>
            <person name="Hickey W.J."/>
        </authorList>
    </citation>
    <scope>NUCLEOTIDE SEQUENCE [LARGE SCALE GENOMIC DNA]</scope>
    <source>
        <strain>ATCC 25391 / DSM 10237 / CIP 104748 / NCIMB 11846 / Nb-255</strain>
    </source>
</reference>
<proteinExistence type="inferred from homology"/>
<dbReference type="EC" id="3.6.1.-" evidence="1"/>
<dbReference type="EMBL" id="CP000115">
    <property type="protein sequence ID" value="ABA03718.1"/>
    <property type="molecule type" value="Genomic_DNA"/>
</dbReference>
<dbReference type="RefSeq" id="WP_011313782.1">
    <property type="nucleotide sequence ID" value="NC_007406.1"/>
</dbReference>
<dbReference type="SMR" id="Q3SVH3"/>
<dbReference type="STRING" id="323098.Nwi_0451"/>
<dbReference type="KEGG" id="nwi:Nwi_0451"/>
<dbReference type="eggNOG" id="COG1051">
    <property type="taxonomic scope" value="Bacteria"/>
</dbReference>
<dbReference type="HOGENOM" id="CLU_087195_3_0_5"/>
<dbReference type="OrthoDB" id="9816040at2"/>
<dbReference type="Proteomes" id="UP000002531">
    <property type="component" value="Chromosome"/>
</dbReference>
<dbReference type="GO" id="GO:0034432">
    <property type="term" value="F:bis(5'-adenosyl)-pentaphosphatase activity"/>
    <property type="evidence" value="ECO:0007669"/>
    <property type="project" value="TreeGrafter"/>
</dbReference>
<dbReference type="GO" id="GO:0008893">
    <property type="term" value="F:guanosine-3',5'-bis(diphosphate) 3'-diphosphatase activity"/>
    <property type="evidence" value="ECO:0007669"/>
    <property type="project" value="TreeGrafter"/>
</dbReference>
<dbReference type="GO" id="GO:0006753">
    <property type="term" value="P:nucleoside phosphate metabolic process"/>
    <property type="evidence" value="ECO:0007669"/>
    <property type="project" value="TreeGrafter"/>
</dbReference>
<dbReference type="GO" id="GO:0019693">
    <property type="term" value="P:ribose phosphate metabolic process"/>
    <property type="evidence" value="ECO:0007669"/>
    <property type="project" value="TreeGrafter"/>
</dbReference>
<dbReference type="CDD" id="cd03671">
    <property type="entry name" value="NUDIX_Ap4A_hydrolase_plant_like"/>
    <property type="match status" value="1"/>
</dbReference>
<dbReference type="Gene3D" id="3.90.79.10">
    <property type="entry name" value="Nucleoside Triphosphate Pyrophosphohydrolase"/>
    <property type="match status" value="1"/>
</dbReference>
<dbReference type="HAMAP" id="MF_00298">
    <property type="entry name" value="Nudix_RppH"/>
    <property type="match status" value="1"/>
</dbReference>
<dbReference type="InterPro" id="IPR015797">
    <property type="entry name" value="NUDIX_hydrolase-like_dom_sf"/>
</dbReference>
<dbReference type="InterPro" id="IPR000086">
    <property type="entry name" value="NUDIX_hydrolase_dom"/>
</dbReference>
<dbReference type="InterPro" id="IPR022927">
    <property type="entry name" value="RppH"/>
</dbReference>
<dbReference type="NCBIfam" id="NF001938">
    <property type="entry name" value="PRK00714.1-5"/>
    <property type="match status" value="1"/>
</dbReference>
<dbReference type="PANTHER" id="PTHR11839:SF22">
    <property type="entry name" value="NUDIX HYDROLASE 26, CHLOROPLASTIC"/>
    <property type="match status" value="1"/>
</dbReference>
<dbReference type="PANTHER" id="PTHR11839">
    <property type="entry name" value="UDP/ADP-SUGAR PYROPHOSPHATASE"/>
    <property type="match status" value="1"/>
</dbReference>
<dbReference type="Pfam" id="PF00293">
    <property type="entry name" value="NUDIX"/>
    <property type="match status" value="1"/>
</dbReference>
<dbReference type="SUPFAM" id="SSF55811">
    <property type="entry name" value="Nudix"/>
    <property type="match status" value="1"/>
</dbReference>
<dbReference type="PROSITE" id="PS51462">
    <property type="entry name" value="NUDIX"/>
    <property type="match status" value="1"/>
</dbReference>
<sequence>MTRYDDLPYRTCVGMMLINERGLVFVGRRAGVEQVDDSYVWQMPQGGVDPGEDTWLAAKRELYEETSVRSIEKLAEIPDWLTYDIPRVVAGRAWKGRYRGQRQKWYAVRFIGEDNEINIANPGDGHKPEFTAWRWEPMQNLTGLIIPFKRPVYERVVKEFASLAGAQAGT</sequence>
<comment type="function">
    <text evidence="1">Accelerates the degradation of transcripts by removing pyrophosphate from the 5'-end of triphosphorylated RNA, leading to a more labile monophosphorylated state that can stimulate subsequent ribonuclease cleavage.</text>
</comment>
<comment type="cofactor">
    <cofactor evidence="1">
        <name>a divalent metal cation</name>
        <dbReference type="ChEBI" id="CHEBI:60240"/>
    </cofactor>
</comment>
<comment type="similarity">
    <text evidence="1">Belongs to the Nudix hydrolase family. RppH subfamily.</text>
</comment>
<name>RPPH_NITWN</name>
<evidence type="ECO:0000255" key="1">
    <source>
        <dbReference type="HAMAP-Rule" id="MF_00298"/>
    </source>
</evidence>
<accession>Q3SVH3</accession>
<protein>
    <recommendedName>
        <fullName evidence="1">RNA pyrophosphohydrolase</fullName>
        <ecNumber evidence="1">3.6.1.-</ecNumber>
    </recommendedName>
    <alternativeName>
        <fullName evidence="1">(Di)nucleoside polyphosphate hydrolase</fullName>
    </alternativeName>
</protein>
<organism>
    <name type="scientific">Nitrobacter winogradskyi (strain ATCC 25391 / DSM 10237 / CIP 104748 / NCIMB 11846 / Nb-255)</name>
    <dbReference type="NCBI Taxonomy" id="323098"/>
    <lineage>
        <taxon>Bacteria</taxon>
        <taxon>Pseudomonadati</taxon>
        <taxon>Pseudomonadota</taxon>
        <taxon>Alphaproteobacteria</taxon>
        <taxon>Hyphomicrobiales</taxon>
        <taxon>Nitrobacteraceae</taxon>
        <taxon>Nitrobacter</taxon>
    </lineage>
</organism>
<gene>
    <name evidence="1" type="primary">rppH</name>
    <name evidence="1" type="synonym">nudH</name>
    <name type="ordered locus">Nwi_0451</name>
</gene>
<keyword id="KW-0378">Hydrolase</keyword>
<keyword id="KW-1185">Reference proteome</keyword>